<gene>
    <name type="primary">NGF</name>
    <name type="synonym">NGFB</name>
</gene>
<keyword id="KW-0165">Cleavage on pair of basic residues</keyword>
<keyword id="KW-1015">Disulfide bond</keyword>
<keyword id="KW-0967">Endosome</keyword>
<keyword id="KW-0325">Glycoprotein</keyword>
<keyword id="KW-0339">Growth factor</keyword>
<keyword id="KW-0446">Lipid-binding</keyword>
<keyword id="KW-0481">Metalloenzyme inhibitor</keyword>
<keyword id="KW-0483">Metalloprotease inhibitor</keyword>
<keyword id="KW-0646">Protease inhibitor</keyword>
<keyword id="KW-1185">Reference proteome</keyword>
<keyword id="KW-0964">Secreted</keyword>
<keyword id="KW-0732">Signal</keyword>
<evidence type="ECO:0000250" key="1"/>
<evidence type="ECO:0000250" key="2">
    <source>
        <dbReference type="UniProtKB" id="P01138"/>
    </source>
</evidence>
<evidence type="ECO:0000250" key="3">
    <source>
        <dbReference type="UniProtKB" id="P01139"/>
    </source>
</evidence>
<evidence type="ECO:0000255" key="4"/>
<evidence type="ECO:0000256" key="5">
    <source>
        <dbReference type="SAM" id="MobiDB-lite"/>
    </source>
</evidence>
<evidence type="ECO:0000305" key="6"/>
<reference key="1">
    <citation type="journal article" date="1994" name="Cytogenet. Cell Genet.">
        <title>A new marker (NGFB) on pig chromosome 4, isolated by using a consensus sequence conserved among species.</title>
        <authorList>
            <person name="Lahbib-Mansais Y."/>
            <person name="Mellink C."/>
            <person name="Yerle M."/>
            <person name="Gellin J."/>
        </authorList>
    </citation>
    <scope>NUCLEOTIDE SEQUENCE [GENOMIC DNA]</scope>
    <source>
        <strain>Large white</strain>
        <tissue>Blood</tissue>
    </source>
</reference>
<proteinExistence type="inferred from homology"/>
<dbReference type="EMBL" id="L31898">
    <property type="protein sequence ID" value="AAA21301.1"/>
    <property type="molecule type" value="Genomic_DNA"/>
</dbReference>
<dbReference type="PIR" id="I46614">
    <property type="entry name" value="I46614"/>
</dbReference>
<dbReference type="SMR" id="Q29074"/>
<dbReference type="FunCoup" id="Q29074">
    <property type="interactions" value="9"/>
</dbReference>
<dbReference type="STRING" id="9823.ENSSSCP00000056905"/>
<dbReference type="GlyCosmos" id="Q29074">
    <property type="glycosylation" value="3 sites, No reported glycans"/>
</dbReference>
<dbReference type="GlyGen" id="Q29074">
    <property type="glycosylation" value="3 sites"/>
</dbReference>
<dbReference type="PaxDb" id="9823-ENSSSCP00000007197"/>
<dbReference type="eggNOG" id="ENOG502RYPU">
    <property type="taxonomic scope" value="Eukaryota"/>
</dbReference>
<dbReference type="InParanoid" id="Q29074"/>
<dbReference type="Proteomes" id="UP000008227">
    <property type="component" value="Unplaced"/>
</dbReference>
<dbReference type="Proteomes" id="UP000314985">
    <property type="component" value="Unplaced"/>
</dbReference>
<dbReference type="Proteomes" id="UP000694570">
    <property type="component" value="Unplaced"/>
</dbReference>
<dbReference type="Proteomes" id="UP000694571">
    <property type="component" value="Unplaced"/>
</dbReference>
<dbReference type="Proteomes" id="UP000694720">
    <property type="component" value="Unplaced"/>
</dbReference>
<dbReference type="Proteomes" id="UP000694722">
    <property type="component" value="Unplaced"/>
</dbReference>
<dbReference type="Proteomes" id="UP000694723">
    <property type="component" value="Unplaced"/>
</dbReference>
<dbReference type="Proteomes" id="UP000694724">
    <property type="component" value="Unplaced"/>
</dbReference>
<dbReference type="Proteomes" id="UP000694725">
    <property type="component" value="Unplaced"/>
</dbReference>
<dbReference type="Proteomes" id="UP000694726">
    <property type="component" value="Unplaced"/>
</dbReference>
<dbReference type="Proteomes" id="UP000694727">
    <property type="component" value="Unplaced"/>
</dbReference>
<dbReference type="Proteomes" id="UP000694728">
    <property type="component" value="Unplaced"/>
</dbReference>
<dbReference type="GO" id="GO:0030424">
    <property type="term" value="C:axon"/>
    <property type="evidence" value="ECO:0000318"/>
    <property type="project" value="GO_Central"/>
</dbReference>
<dbReference type="GO" id="GO:0030425">
    <property type="term" value="C:dendrite"/>
    <property type="evidence" value="ECO:0000318"/>
    <property type="project" value="GO_Central"/>
</dbReference>
<dbReference type="GO" id="GO:0031904">
    <property type="term" value="C:endosome lumen"/>
    <property type="evidence" value="ECO:0007669"/>
    <property type="project" value="UniProtKB-SubCell"/>
</dbReference>
<dbReference type="GO" id="GO:0005615">
    <property type="term" value="C:extracellular space"/>
    <property type="evidence" value="ECO:0000318"/>
    <property type="project" value="GO_Central"/>
</dbReference>
<dbReference type="GO" id="GO:0008021">
    <property type="term" value="C:synaptic vesicle"/>
    <property type="evidence" value="ECO:0000318"/>
    <property type="project" value="GO_Central"/>
</dbReference>
<dbReference type="GO" id="GO:0008083">
    <property type="term" value="F:growth factor activity"/>
    <property type="evidence" value="ECO:0000318"/>
    <property type="project" value="GO_Central"/>
</dbReference>
<dbReference type="GO" id="GO:0008289">
    <property type="term" value="F:lipid binding"/>
    <property type="evidence" value="ECO:0007669"/>
    <property type="project" value="UniProtKB-KW"/>
</dbReference>
<dbReference type="GO" id="GO:0008191">
    <property type="term" value="F:metalloendopeptidase inhibitor activity"/>
    <property type="evidence" value="ECO:0000250"/>
    <property type="project" value="UniProtKB"/>
</dbReference>
<dbReference type="GO" id="GO:0005163">
    <property type="term" value="F:nerve growth factor receptor binding"/>
    <property type="evidence" value="ECO:0000318"/>
    <property type="project" value="GO_Central"/>
</dbReference>
<dbReference type="GO" id="GO:0007169">
    <property type="term" value="P:cell surface receptor protein tyrosine kinase signaling pathway"/>
    <property type="evidence" value="ECO:0000318"/>
    <property type="project" value="GO_Central"/>
</dbReference>
<dbReference type="GO" id="GO:0050804">
    <property type="term" value="P:modulation of chemical synaptic transmission"/>
    <property type="evidence" value="ECO:0000318"/>
    <property type="project" value="GO_Central"/>
</dbReference>
<dbReference type="GO" id="GO:0043524">
    <property type="term" value="P:negative regulation of neuron apoptotic process"/>
    <property type="evidence" value="ECO:0000318"/>
    <property type="project" value="GO_Central"/>
</dbReference>
<dbReference type="GO" id="GO:0021675">
    <property type="term" value="P:nerve development"/>
    <property type="evidence" value="ECO:0000318"/>
    <property type="project" value="GO_Central"/>
</dbReference>
<dbReference type="GO" id="GO:0038180">
    <property type="term" value="P:nerve growth factor signaling pathway"/>
    <property type="evidence" value="ECO:0000318"/>
    <property type="project" value="GO_Central"/>
</dbReference>
<dbReference type="GO" id="GO:0048812">
    <property type="term" value="P:neuron projection morphogenesis"/>
    <property type="evidence" value="ECO:0000318"/>
    <property type="project" value="GO_Central"/>
</dbReference>
<dbReference type="FunFam" id="2.10.90.10:FF:000002">
    <property type="entry name" value="Brain-derived neurotrophic factor"/>
    <property type="match status" value="1"/>
</dbReference>
<dbReference type="Gene3D" id="2.10.90.10">
    <property type="entry name" value="Cystine-knot cytokines"/>
    <property type="match status" value="1"/>
</dbReference>
<dbReference type="InterPro" id="IPR029034">
    <property type="entry name" value="Cystine-knot_cytokine"/>
</dbReference>
<dbReference type="InterPro" id="IPR020408">
    <property type="entry name" value="Nerve_growth_factor-like"/>
</dbReference>
<dbReference type="InterPro" id="IPR002072">
    <property type="entry name" value="Nerve_growth_factor-rel"/>
</dbReference>
<dbReference type="InterPro" id="IPR020425">
    <property type="entry name" value="Nerve_growth_factor_bsu"/>
</dbReference>
<dbReference type="InterPro" id="IPR020437">
    <property type="entry name" value="Nerve_growth_factor_bsu_mml"/>
</dbReference>
<dbReference type="InterPro" id="IPR019846">
    <property type="entry name" value="Nerve_growth_factor_CS"/>
</dbReference>
<dbReference type="PANTHER" id="PTHR11589:SF10">
    <property type="entry name" value="BETA-NERVE GROWTH FACTOR"/>
    <property type="match status" value="1"/>
</dbReference>
<dbReference type="PANTHER" id="PTHR11589">
    <property type="entry name" value="NERVE GROWTH FACTOR NGF -RELATED"/>
    <property type="match status" value="1"/>
</dbReference>
<dbReference type="Pfam" id="PF00243">
    <property type="entry name" value="NGF"/>
    <property type="match status" value="1"/>
</dbReference>
<dbReference type="PIRSF" id="PIRSF001789">
    <property type="entry name" value="NGF"/>
    <property type="match status" value="1"/>
</dbReference>
<dbReference type="PRINTS" id="PR01925">
    <property type="entry name" value="MAMLNGFBETA"/>
</dbReference>
<dbReference type="PRINTS" id="PR00268">
    <property type="entry name" value="NGF"/>
</dbReference>
<dbReference type="PRINTS" id="PR01913">
    <property type="entry name" value="NGFBETA"/>
</dbReference>
<dbReference type="SMART" id="SM00140">
    <property type="entry name" value="NGF"/>
    <property type="match status" value="1"/>
</dbReference>
<dbReference type="SUPFAM" id="SSF57501">
    <property type="entry name" value="Cystine-knot cytokines"/>
    <property type="match status" value="1"/>
</dbReference>
<dbReference type="PROSITE" id="PS00248">
    <property type="entry name" value="NGF_1"/>
    <property type="match status" value="1"/>
</dbReference>
<dbReference type="PROSITE" id="PS50270">
    <property type="entry name" value="NGF_2"/>
    <property type="match status" value="1"/>
</dbReference>
<sequence>LIGIQAEPHTESNVPAGHAIPQAHWTKLQHSLDTALRRAHSAPAGANSARVAGQTRNITVDPKLFKKRRLRSPRVLFSTQPPPVAADTQDPDLEASGAASFNRTHRSKRSSSHPVFHRGEFSVCDSVSVWVGDKTTATDIKGKEVMVLGEVNINNSVFKQYFFETKCRDPNPVDSGCRGIDSKHWNSYCTTTHTFVKALTMDGKQAAWRFIRIDTACVCVLSRKAGRRA</sequence>
<accession>Q29074</accession>
<name>NGF_PIG</name>
<organism>
    <name type="scientific">Sus scrofa</name>
    <name type="common">Pig</name>
    <dbReference type="NCBI Taxonomy" id="9823"/>
    <lineage>
        <taxon>Eukaryota</taxon>
        <taxon>Metazoa</taxon>
        <taxon>Chordata</taxon>
        <taxon>Craniata</taxon>
        <taxon>Vertebrata</taxon>
        <taxon>Euteleostomi</taxon>
        <taxon>Mammalia</taxon>
        <taxon>Eutheria</taxon>
        <taxon>Laurasiatheria</taxon>
        <taxon>Artiodactyla</taxon>
        <taxon>Suina</taxon>
        <taxon>Suidae</taxon>
        <taxon>Sus</taxon>
    </lineage>
</organism>
<feature type="signal peptide" evidence="4">
    <location>
        <begin position="1" status="less than"/>
        <end position="6"/>
    </location>
</feature>
<feature type="propeptide" id="PRO_0000019605" evidence="1">
    <location>
        <begin position="7"/>
        <end position="109"/>
    </location>
</feature>
<feature type="chain" id="PRO_0000019606" description="Beta-nerve growth factor">
    <location>
        <begin position="110"/>
        <end position="229"/>
    </location>
</feature>
<feature type="region of interest" description="Disordered" evidence="5">
    <location>
        <begin position="77"/>
        <end position="112"/>
    </location>
</feature>
<feature type="binding site" description="in other chain" evidence="3">
    <location>
        <position position="161"/>
    </location>
    <ligand>
        <name>a 1-acyl-sn-glycero-3-phospho-(1D-myo-inositol)</name>
        <dbReference type="ChEBI" id="CHEBI:64771"/>
        <note>ligand shared between dimeric partners</note>
    </ligand>
</feature>
<feature type="binding site" evidence="3">
    <location>
        <position position="197"/>
    </location>
    <ligand>
        <name>a 1-acyl-sn-glycero-3-phospho-(1D-myo-inositol)</name>
        <dbReference type="ChEBI" id="CHEBI:64771"/>
        <note>ligand shared between dimeric partners</note>
    </ligand>
</feature>
<feature type="binding site" evidence="3">
    <location>
        <position position="197"/>
    </location>
    <ligand>
        <name>a 1-acyl-sn-glycero-3-phospho-L-serine</name>
        <dbReference type="ChEBI" id="CHEBI:64379"/>
        <note>ligand shared between dimeric partners</note>
    </ligand>
</feature>
<feature type="glycosylation site" description="N-linked (GlcNAc...) asparagine" evidence="4">
    <location>
        <position position="57"/>
    </location>
</feature>
<feature type="glycosylation site" description="N-linked (GlcNAc...) asparagine" evidence="4">
    <location>
        <position position="102"/>
    </location>
</feature>
<feature type="glycosylation site" description="N-linked (GlcNAc...) asparagine" evidence="4">
    <location>
        <position position="154"/>
    </location>
</feature>
<feature type="disulfide bond" evidence="2">
    <location>
        <begin position="124"/>
        <end position="189"/>
    </location>
</feature>
<feature type="disulfide bond" evidence="2">
    <location>
        <begin position="167"/>
        <end position="217"/>
    </location>
</feature>
<feature type="disulfide bond" evidence="2">
    <location>
        <begin position="177"/>
        <end position="219"/>
    </location>
</feature>
<feature type="non-terminal residue">
    <location>
        <position position="1"/>
    </location>
</feature>
<protein>
    <recommendedName>
        <fullName>Beta-nerve growth factor</fullName>
        <shortName>Beta-NGF</shortName>
    </recommendedName>
</protein>
<comment type="function">
    <text evidence="2 3">Nerve growth factor is important for the development and maintenance of the sympathetic and sensory nervous systems. Extracellular ligand for the NTRK1 and NGFR receptors, activates cellular signaling cascades to regulate neuronal proliferation, differentiation and survival (By similarity). The immature NGF precursor (proNGF) functions as a ligand for the heterodimeric receptor formed by SORCS2 and NGFR, and activates cellular signaling cascades that lead to inactivation of RAC1 and/or RAC2, reorganization of the actin cytoskeleton and neuronal growth cone collapse. In contrast to mature NGF, the precursor form (proNGF) promotes neuronal apoptosis (in vitro) (By similarity). Inhibits metalloproteinase-dependent proteolysis of platelet glycoprotein VI (By similarity). Binds lysophosphatidylinositol and lysophosphatidylserine between the two chains of the homodimer. The lipid-bound form promotes histamine relase from mast cells, contrary to the lipid-free form (By similarity).</text>
</comment>
<comment type="subunit">
    <text evidence="2 3">Homodimer. The homodimer interacts with a single NTRK1 chain. The homodimer interacts with a single NGFR chain (By similarity). The NGF dimer interacts with a single SORCS2 chain (via extracellular domain). The NGF precursor (proNGF) binds to a receptor complex formed by SORT1 and NGFR, which leads to NGF endocytosis. Both mature NGF and the immature NGF precursor (proNGF) interact with SORCS2 and with the heterodimer formed by SORCS2 and NGFR (via extracellular domains). The NGF precursor (proNGF) has much higher affinity for SORCS2 than mature NGF. The NGF precursor (proNGF) has much higher affinity for SORT1 than mature NGF (By similarity). Interacts with ADAM10 in a divalent cation-dependent manner (By similarity). Interacts with SORCS3 (By similarity).</text>
</comment>
<comment type="subcellular location">
    <subcellularLocation>
        <location evidence="2">Secreted</location>
    </subcellularLocation>
    <subcellularLocation>
        <location evidence="3">Endosome lumen</location>
    </subcellularLocation>
    <text evidence="3">ProNGF is endocytosed after binding to the cell surface receptor formed by SORT1 and NGFR.</text>
</comment>
<comment type="similarity">
    <text evidence="6">Belongs to the NGF-beta family.</text>
</comment>